<gene>
    <name evidence="1" type="primary">mqo</name>
    <name type="ordered locus">BCI_0001</name>
</gene>
<proteinExistence type="inferred from homology"/>
<evidence type="ECO:0000255" key="1">
    <source>
        <dbReference type="HAMAP-Rule" id="MF_00212"/>
    </source>
</evidence>
<accession>Q1LU84</accession>
<keyword id="KW-0274">FAD</keyword>
<keyword id="KW-0285">Flavoprotein</keyword>
<keyword id="KW-0560">Oxidoreductase</keyword>
<keyword id="KW-1185">Reference proteome</keyword>
<keyword id="KW-0816">Tricarboxylic acid cycle</keyword>
<feature type="chain" id="PRO_0000325486" description="Probable malate:quinone oxidoreductase">
    <location>
        <begin position="1"/>
        <end position="507"/>
    </location>
</feature>
<name>MQO_BAUCH</name>
<sequence>MKSSCTINTKIVDIVLIGGGLMSATLGTYLQLLEPNWTIHMYERLENTAEESSNGWNNAGTGHAAFCELNYTPIQQNGSIDISKAILINESFEISRQFWSYLVKNNLLTNPQSFINNMPHINFVWGDENTRFLYQRFKALQCCTIFNGMEYSENHQQISEWAPLIMAGRNTYQKVAATRMLMGTDVNFGELTQQLLNSLQRNPQFHLYMKTDVVDIKRNNDNTWTIYTLNSKDSYSNTEVRSRYVFIGCGGRSLQLLQQSGLNEANNYAGFPVGGKFLVTNNPTIIKDHNAKVYGKAKIGAPPISVPHLDARILNGQKMLFFGPFATFSSKFLKYGSYLDFFQSITFKNMLPMLYVGKNNFNLVKYLISQLIMSETDRLDALCEYYPKASLKDWKIIQAGQRVQVIQKDKKTGGILQFGTKVIYSQDRTLSTLLGASPGASTAAYIMLELLDVMFKQYITSESWQRKLKEIIPSYGQILNGNLSLTNQIRSYTCEVLNLNYIKAMPS</sequence>
<reference key="1">
    <citation type="journal article" date="2006" name="PLoS Biol.">
        <title>Metabolic complementarity and genomics of the dual bacterial symbiosis of sharpshooters.</title>
        <authorList>
            <person name="Wu D."/>
            <person name="Daugherty S.C."/>
            <person name="Van Aken S.E."/>
            <person name="Pai G.H."/>
            <person name="Watkins K.L."/>
            <person name="Khouri H."/>
            <person name="Tallon L.J."/>
            <person name="Zaborsky J.M."/>
            <person name="Dunbar H.E."/>
            <person name="Tran P.L."/>
            <person name="Moran N.A."/>
            <person name="Eisen J.A."/>
        </authorList>
    </citation>
    <scope>NUCLEOTIDE SEQUENCE [LARGE SCALE GENOMIC DNA]</scope>
</reference>
<protein>
    <recommendedName>
        <fullName evidence="1">Probable malate:quinone oxidoreductase</fullName>
        <ecNumber evidence="1">1.1.5.4</ecNumber>
    </recommendedName>
    <alternativeName>
        <fullName evidence="1">MQO</fullName>
    </alternativeName>
    <alternativeName>
        <fullName evidence="1">Malate dehydrogenase [quinone]</fullName>
    </alternativeName>
</protein>
<comment type="catalytic activity">
    <reaction evidence="1">
        <text>(S)-malate + a quinone = a quinol + oxaloacetate</text>
        <dbReference type="Rhea" id="RHEA:46012"/>
        <dbReference type="ChEBI" id="CHEBI:15589"/>
        <dbReference type="ChEBI" id="CHEBI:16452"/>
        <dbReference type="ChEBI" id="CHEBI:24646"/>
        <dbReference type="ChEBI" id="CHEBI:132124"/>
        <dbReference type="EC" id="1.1.5.4"/>
    </reaction>
</comment>
<comment type="cofactor">
    <cofactor evidence="1">
        <name>FAD</name>
        <dbReference type="ChEBI" id="CHEBI:57692"/>
    </cofactor>
</comment>
<comment type="pathway">
    <text evidence="1">Carbohydrate metabolism; tricarboxylic acid cycle; oxaloacetate from (S)-malate (quinone route): step 1/1.</text>
</comment>
<comment type="similarity">
    <text evidence="1">Belongs to the MQO family.</text>
</comment>
<organism>
    <name type="scientific">Baumannia cicadellinicola subsp. Homalodisca coagulata</name>
    <dbReference type="NCBI Taxonomy" id="374463"/>
    <lineage>
        <taxon>Bacteria</taxon>
        <taxon>Pseudomonadati</taxon>
        <taxon>Pseudomonadota</taxon>
        <taxon>Gammaproteobacteria</taxon>
        <taxon>Candidatus Palibaumannia</taxon>
    </lineage>
</organism>
<dbReference type="EC" id="1.1.5.4" evidence="1"/>
<dbReference type="EMBL" id="CP000238">
    <property type="protein sequence ID" value="ABF14239.1"/>
    <property type="molecule type" value="Genomic_DNA"/>
</dbReference>
<dbReference type="SMR" id="Q1LU84"/>
<dbReference type="STRING" id="374463.BCI_0001"/>
<dbReference type="KEGG" id="bci:BCI_0001"/>
<dbReference type="HOGENOM" id="CLU_028151_0_0_6"/>
<dbReference type="OrthoDB" id="9763983at2"/>
<dbReference type="UniPathway" id="UPA00223">
    <property type="reaction ID" value="UER01008"/>
</dbReference>
<dbReference type="Proteomes" id="UP000002427">
    <property type="component" value="Chromosome"/>
</dbReference>
<dbReference type="GO" id="GO:0047545">
    <property type="term" value="F:2-hydroxyglutarate dehydrogenase activity"/>
    <property type="evidence" value="ECO:0007669"/>
    <property type="project" value="TreeGrafter"/>
</dbReference>
<dbReference type="GO" id="GO:0008924">
    <property type="term" value="F:L-malate dehydrogenase (quinone) activity"/>
    <property type="evidence" value="ECO:0007669"/>
    <property type="project" value="UniProtKB-UniRule"/>
</dbReference>
<dbReference type="GO" id="GO:0006099">
    <property type="term" value="P:tricarboxylic acid cycle"/>
    <property type="evidence" value="ECO:0007669"/>
    <property type="project" value="UniProtKB-UniRule"/>
</dbReference>
<dbReference type="Gene3D" id="3.50.50.60">
    <property type="entry name" value="FAD/NAD(P)-binding domain"/>
    <property type="match status" value="1"/>
</dbReference>
<dbReference type="HAMAP" id="MF_00212">
    <property type="entry name" value="MQO"/>
    <property type="match status" value="1"/>
</dbReference>
<dbReference type="InterPro" id="IPR036188">
    <property type="entry name" value="FAD/NAD-bd_sf"/>
</dbReference>
<dbReference type="InterPro" id="IPR006231">
    <property type="entry name" value="MQO"/>
</dbReference>
<dbReference type="NCBIfam" id="TIGR01320">
    <property type="entry name" value="mal_quin_oxido"/>
    <property type="match status" value="1"/>
</dbReference>
<dbReference type="NCBIfam" id="NF003603">
    <property type="entry name" value="PRK05257.1-1"/>
    <property type="match status" value="1"/>
</dbReference>
<dbReference type="NCBIfam" id="NF003605">
    <property type="entry name" value="PRK05257.1-4"/>
    <property type="match status" value="1"/>
</dbReference>
<dbReference type="NCBIfam" id="NF003606">
    <property type="entry name" value="PRK05257.2-1"/>
    <property type="match status" value="1"/>
</dbReference>
<dbReference type="NCBIfam" id="NF003611">
    <property type="entry name" value="PRK05257.3-2"/>
    <property type="match status" value="1"/>
</dbReference>
<dbReference type="NCBIfam" id="NF009875">
    <property type="entry name" value="PRK13339.1"/>
    <property type="match status" value="1"/>
</dbReference>
<dbReference type="PANTHER" id="PTHR43104">
    <property type="entry name" value="L-2-HYDROXYGLUTARATE DEHYDROGENASE, MITOCHONDRIAL"/>
    <property type="match status" value="1"/>
</dbReference>
<dbReference type="PANTHER" id="PTHR43104:SF2">
    <property type="entry name" value="L-2-HYDROXYGLUTARATE DEHYDROGENASE, MITOCHONDRIAL"/>
    <property type="match status" value="1"/>
</dbReference>
<dbReference type="Pfam" id="PF06039">
    <property type="entry name" value="Mqo"/>
    <property type="match status" value="1"/>
</dbReference>
<dbReference type="SUPFAM" id="SSF51905">
    <property type="entry name" value="FAD/NAD(P)-binding domain"/>
    <property type="match status" value="1"/>
</dbReference>